<name>YL236_MIMIV</name>
<sequence length="148" mass="17764">MYQPNFSTICNHNRLKRIDDNFVRCLDCGLSLINQVKILPNKTRQDFSKENKSFLRNFDRNFSNLIEQVDEESSVPTYKYYTDRKWLNLIKINNIVQFQTNPPKYEVFINGEKSYLTQKQIDRIIQTLGVIHIDEDQYNYIARSMRKN</sequence>
<feature type="chain" id="PRO_0000253207" description="Uncharacterized protein L236">
    <location>
        <begin position="1"/>
        <end position="148"/>
    </location>
</feature>
<organism>
    <name type="scientific">Acanthamoeba polyphaga mimivirus</name>
    <name type="common">APMV</name>
    <dbReference type="NCBI Taxonomy" id="212035"/>
    <lineage>
        <taxon>Viruses</taxon>
        <taxon>Varidnaviria</taxon>
        <taxon>Bamfordvirae</taxon>
        <taxon>Nucleocytoviricota</taxon>
        <taxon>Megaviricetes</taxon>
        <taxon>Imitervirales</taxon>
        <taxon>Mimiviridae</taxon>
        <taxon>Megamimivirinae</taxon>
        <taxon>Mimivirus</taxon>
        <taxon>Mimivirus bradfordmassiliense</taxon>
    </lineage>
</organism>
<reference key="1">
    <citation type="journal article" date="2004" name="Science">
        <title>The 1.2-megabase genome sequence of Mimivirus.</title>
        <authorList>
            <person name="Raoult D."/>
            <person name="Audic S."/>
            <person name="Robert C."/>
            <person name="Abergel C."/>
            <person name="Renesto P."/>
            <person name="Ogata H."/>
            <person name="La Scola B."/>
            <person name="Susan M."/>
            <person name="Claverie J.-M."/>
        </authorList>
    </citation>
    <scope>NUCLEOTIDE SEQUENCE [LARGE SCALE GENOMIC DNA]</scope>
    <source>
        <strain>Rowbotham-Bradford</strain>
    </source>
</reference>
<keyword id="KW-1185">Reference proteome</keyword>
<protein>
    <recommendedName>
        <fullName>Uncharacterized protein L236</fullName>
    </recommendedName>
</protein>
<gene>
    <name type="ordered locus">MIMI_L236</name>
</gene>
<organismHost>
    <name type="scientific">Acanthamoeba polyphaga</name>
    <name type="common">Amoeba</name>
    <dbReference type="NCBI Taxonomy" id="5757"/>
</organismHost>
<dbReference type="EMBL" id="AY653733">
    <property type="protein sequence ID" value="AAV50509.1"/>
    <property type="molecule type" value="Genomic_DNA"/>
</dbReference>
<dbReference type="KEGG" id="vg:9924843"/>
<dbReference type="OrthoDB" id="22452at10239"/>
<dbReference type="Proteomes" id="UP000001134">
    <property type="component" value="Genome"/>
</dbReference>
<proteinExistence type="predicted"/>
<accession>Q5UPX6</accession>